<comment type="catalytic activity">
    <reaction evidence="1">
        <text>(6R)-10-formyltetrahydrofolate + 5-amino-1-(5-phospho-beta-D-ribosyl)imidazole-4-carboxamide = 5-formamido-1-(5-phospho-D-ribosyl)imidazole-4-carboxamide + (6S)-5,6,7,8-tetrahydrofolate</text>
        <dbReference type="Rhea" id="RHEA:22192"/>
        <dbReference type="ChEBI" id="CHEBI:57453"/>
        <dbReference type="ChEBI" id="CHEBI:58467"/>
        <dbReference type="ChEBI" id="CHEBI:58475"/>
        <dbReference type="ChEBI" id="CHEBI:195366"/>
        <dbReference type="EC" id="2.1.2.3"/>
    </reaction>
</comment>
<comment type="catalytic activity">
    <reaction evidence="1">
        <text>IMP + H2O = 5-formamido-1-(5-phospho-D-ribosyl)imidazole-4-carboxamide</text>
        <dbReference type="Rhea" id="RHEA:18445"/>
        <dbReference type="ChEBI" id="CHEBI:15377"/>
        <dbReference type="ChEBI" id="CHEBI:58053"/>
        <dbReference type="ChEBI" id="CHEBI:58467"/>
        <dbReference type="EC" id="3.5.4.10"/>
    </reaction>
</comment>
<comment type="pathway">
    <text evidence="1">Purine metabolism; IMP biosynthesis via de novo pathway; 5-formamido-1-(5-phospho-D-ribosyl)imidazole-4-carboxamide from 5-amino-1-(5-phospho-D-ribosyl)imidazole-4-carboxamide (10-formyl THF route): step 1/1.</text>
</comment>
<comment type="pathway">
    <text evidence="1">Purine metabolism; IMP biosynthesis via de novo pathway; IMP from 5-formamido-1-(5-phospho-D-ribosyl)imidazole-4-carboxamide: step 1/1.</text>
</comment>
<comment type="domain">
    <text evidence="1">The IMP cyclohydrolase activity resides in the N-terminal region.</text>
</comment>
<comment type="similarity">
    <text evidence="1">Belongs to the PurH family.</text>
</comment>
<sequence length="530" mass="56465">MTDHPRRVTRALLSVSDKTGLIEFAKALAAHDVELVSTGGTAKAIAAAGLKVKDVSELTGFPEMMDGRVKTLHPKVHGGLLAIRDNKDHADAMKAHGIAPIDLLVVNLYPFEATVDKGAGFEDCIENIDIGGPAMIRAAAKNHDDVAVVVEAEDYKAVLDELAANKGATTLKLRRRLAAKAYARTAAYDAAISNWFNRQLEIDAPDFRAFGGKLIQSLRYGENPHQTAAFYATPDKRPGVSTARQLQGKELSYNNINDTDAAYECIGEFDAKRTAACVIVKHANPCGVAEGSDLVSAYRKALACDSTSAFGGIIAMNRALDADTAREITKIFTEVIIAPDASEEAIAIIGARKNLRLLLAGSLPDPRAPGLTAKTVAGGLLVQSRDNAVVDDMTFKVVTKRAPTDAEMRDLKFAFRVAKHVKSNTIIYAKDLATVGIGAGQMSRVDSARIAARKAQDAAVELKLAEPLTKGSVVASDAFFPFADGMLACIEAGATAVVQPGGSMRDDEVIKAADEHGIAMVFTGTRHFRH</sequence>
<keyword id="KW-0378">Hydrolase</keyword>
<keyword id="KW-0511">Multifunctional enzyme</keyword>
<keyword id="KW-0658">Purine biosynthesis</keyword>
<keyword id="KW-1185">Reference proteome</keyword>
<keyword id="KW-0808">Transferase</keyword>
<reference key="1">
    <citation type="journal article" date="2002" name="DNA Res.">
        <title>Complete genomic sequence of nitrogen-fixing symbiotic bacterium Bradyrhizobium japonicum USDA110.</title>
        <authorList>
            <person name="Kaneko T."/>
            <person name="Nakamura Y."/>
            <person name="Sato S."/>
            <person name="Minamisawa K."/>
            <person name="Uchiumi T."/>
            <person name="Sasamoto S."/>
            <person name="Watanabe A."/>
            <person name="Idesawa K."/>
            <person name="Iriguchi M."/>
            <person name="Kawashima K."/>
            <person name="Kohara M."/>
            <person name="Matsumoto M."/>
            <person name="Shimpo S."/>
            <person name="Tsuruoka H."/>
            <person name="Wada T."/>
            <person name="Yamada M."/>
            <person name="Tabata S."/>
        </authorList>
    </citation>
    <scope>NUCLEOTIDE SEQUENCE [LARGE SCALE GENOMIC DNA]</scope>
    <source>
        <strain>JCM 10833 / BCRC 13528 / IAM 13628 / NBRC 14792 / USDA 110</strain>
    </source>
</reference>
<accession>Q89WU7</accession>
<dbReference type="EC" id="2.1.2.3" evidence="1"/>
<dbReference type="EC" id="3.5.4.10" evidence="1"/>
<dbReference type="EMBL" id="BA000040">
    <property type="protein sequence ID" value="BAC45846.1"/>
    <property type="molecule type" value="Genomic_DNA"/>
</dbReference>
<dbReference type="RefSeq" id="NP_767221.1">
    <property type="nucleotide sequence ID" value="NC_004463.1"/>
</dbReference>
<dbReference type="RefSeq" id="WP_011083410.1">
    <property type="nucleotide sequence ID" value="NC_004463.1"/>
</dbReference>
<dbReference type="SMR" id="Q89WU7"/>
<dbReference type="FunCoup" id="Q89WU7">
    <property type="interactions" value="672"/>
</dbReference>
<dbReference type="STRING" id="224911.AAV28_42185"/>
<dbReference type="EnsemblBacteria" id="BAC45846">
    <property type="protein sequence ID" value="BAC45846"/>
    <property type="gene ID" value="BAC45846"/>
</dbReference>
<dbReference type="GeneID" id="46495727"/>
<dbReference type="KEGG" id="bja:blr0581"/>
<dbReference type="PATRIC" id="fig|224911.44.peg.9123"/>
<dbReference type="eggNOG" id="COG0138">
    <property type="taxonomic scope" value="Bacteria"/>
</dbReference>
<dbReference type="HOGENOM" id="CLU_016316_5_2_5"/>
<dbReference type="InParanoid" id="Q89WU7"/>
<dbReference type="OrthoDB" id="9802065at2"/>
<dbReference type="PhylomeDB" id="Q89WU7"/>
<dbReference type="UniPathway" id="UPA00074">
    <property type="reaction ID" value="UER00133"/>
</dbReference>
<dbReference type="UniPathway" id="UPA00074">
    <property type="reaction ID" value="UER00135"/>
</dbReference>
<dbReference type="Proteomes" id="UP000002526">
    <property type="component" value="Chromosome"/>
</dbReference>
<dbReference type="GO" id="GO:0005829">
    <property type="term" value="C:cytosol"/>
    <property type="evidence" value="ECO:0000318"/>
    <property type="project" value="GO_Central"/>
</dbReference>
<dbReference type="GO" id="GO:0003937">
    <property type="term" value="F:IMP cyclohydrolase activity"/>
    <property type="evidence" value="ECO:0000318"/>
    <property type="project" value="GO_Central"/>
</dbReference>
<dbReference type="GO" id="GO:0004643">
    <property type="term" value="F:phosphoribosylaminoimidazolecarboxamide formyltransferase activity"/>
    <property type="evidence" value="ECO:0000318"/>
    <property type="project" value="GO_Central"/>
</dbReference>
<dbReference type="GO" id="GO:0006189">
    <property type="term" value="P:'de novo' IMP biosynthetic process"/>
    <property type="evidence" value="ECO:0000318"/>
    <property type="project" value="GO_Central"/>
</dbReference>
<dbReference type="CDD" id="cd01421">
    <property type="entry name" value="IMPCH"/>
    <property type="match status" value="1"/>
</dbReference>
<dbReference type="FunFam" id="3.40.140.20:FF:000001">
    <property type="entry name" value="Bifunctional purine biosynthesis protein PurH"/>
    <property type="match status" value="1"/>
</dbReference>
<dbReference type="FunFam" id="3.40.140.20:FF:000002">
    <property type="entry name" value="Bifunctional purine biosynthesis protein PurH"/>
    <property type="match status" value="1"/>
</dbReference>
<dbReference type="FunFam" id="3.40.50.1380:FF:000001">
    <property type="entry name" value="Bifunctional purine biosynthesis protein PurH"/>
    <property type="match status" value="1"/>
</dbReference>
<dbReference type="Gene3D" id="3.40.140.20">
    <property type="match status" value="2"/>
</dbReference>
<dbReference type="Gene3D" id="3.40.50.1380">
    <property type="entry name" value="Methylglyoxal synthase-like domain"/>
    <property type="match status" value="1"/>
</dbReference>
<dbReference type="HAMAP" id="MF_00139">
    <property type="entry name" value="PurH"/>
    <property type="match status" value="1"/>
</dbReference>
<dbReference type="InterPro" id="IPR024051">
    <property type="entry name" value="AICAR_Tfase_dup_dom_sf"/>
</dbReference>
<dbReference type="InterPro" id="IPR016193">
    <property type="entry name" value="Cytidine_deaminase-like"/>
</dbReference>
<dbReference type="InterPro" id="IPR011607">
    <property type="entry name" value="MGS-like_dom"/>
</dbReference>
<dbReference type="InterPro" id="IPR036914">
    <property type="entry name" value="MGS-like_dom_sf"/>
</dbReference>
<dbReference type="InterPro" id="IPR002695">
    <property type="entry name" value="PurH-like"/>
</dbReference>
<dbReference type="NCBIfam" id="NF002049">
    <property type="entry name" value="PRK00881.1"/>
    <property type="match status" value="1"/>
</dbReference>
<dbReference type="NCBIfam" id="TIGR00355">
    <property type="entry name" value="purH"/>
    <property type="match status" value="1"/>
</dbReference>
<dbReference type="PANTHER" id="PTHR11692:SF0">
    <property type="entry name" value="BIFUNCTIONAL PURINE BIOSYNTHESIS PROTEIN ATIC"/>
    <property type="match status" value="1"/>
</dbReference>
<dbReference type="PANTHER" id="PTHR11692">
    <property type="entry name" value="BIFUNCTIONAL PURINE BIOSYNTHESIS PROTEIN PURH"/>
    <property type="match status" value="1"/>
</dbReference>
<dbReference type="Pfam" id="PF01808">
    <property type="entry name" value="AICARFT_IMPCHas"/>
    <property type="match status" value="1"/>
</dbReference>
<dbReference type="Pfam" id="PF02142">
    <property type="entry name" value="MGS"/>
    <property type="match status" value="1"/>
</dbReference>
<dbReference type="PIRSF" id="PIRSF000414">
    <property type="entry name" value="AICARFT_IMPCHas"/>
    <property type="match status" value="1"/>
</dbReference>
<dbReference type="SMART" id="SM00798">
    <property type="entry name" value="AICARFT_IMPCHas"/>
    <property type="match status" value="1"/>
</dbReference>
<dbReference type="SMART" id="SM00851">
    <property type="entry name" value="MGS"/>
    <property type="match status" value="1"/>
</dbReference>
<dbReference type="SUPFAM" id="SSF53927">
    <property type="entry name" value="Cytidine deaminase-like"/>
    <property type="match status" value="1"/>
</dbReference>
<dbReference type="SUPFAM" id="SSF52335">
    <property type="entry name" value="Methylglyoxal synthase-like"/>
    <property type="match status" value="1"/>
</dbReference>
<dbReference type="PROSITE" id="PS51855">
    <property type="entry name" value="MGS"/>
    <property type="match status" value="1"/>
</dbReference>
<gene>
    <name evidence="1" type="primary">purH</name>
    <name type="ordered locus">blr0581</name>
</gene>
<protein>
    <recommendedName>
        <fullName evidence="1">Bifunctional purine biosynthesis protein PurH</fullName>
    </recommendedName>
    <domain>
        <recommendedName>
            <fullName evidence="1">Phosphoribosylaminoimidazolecarboxamide formyltransferase</fullName>
            <ecNumber evidence="1">2.1.2.3</ecNumber>
        </recommendedName>
        <alternativeName>
            <fullName evidence="1">AICAR transformylase</fullName>
        </alternativeName>
    </domain>
    <domain>
        <recommendedName>
            <fullName evidence="1">IMP cyclohydrolase</fullName>
            <ecNumber evidence="1">3.5.4.10</ecNumber>
        </recommendedName>
        <alternativeName>
            <fullName evidence="1">ATIC</fullName>
        </alternativeName>
        <alternativeName>
            <fullName evidence="1">IMP synthase</fullName>
        </alternativeName>
        <alternativeName>
            <fullName evidence="1">Inosinicase</fullName>
        </alternativeName>
    </domain>
</protein>
<organism>
    <name type="scientific">Bradyrhizobium diazoefficiens (strain JCM 10833 / BCRC 13528 / IAM 13628 / NBRC 14792 / USDA 110)</name>
    <dbReference type="NCBI Taxonomy" id="224911"/>
    <lineage>
        <taxon>Bacteria</taxon>
        <taxon>Pseudomonadati</taxon>
        <taxon>Pseudomonadota</taxon>
        <taxon>Alphaproteobacteria</taxon>
        <taxon>Hyphomicrobiales</taxon>
        <taxon>Nitrobacteraceae</taxon>
        <taxon>Bradyrhizobium</taxon>
    </lineage>
</organism>
<feature type="chain" id="PRO_0000192073" description="Bifunctional purine biosynthesis protein PurH">
    <location>
        <begin position="1"/>
        <end position="530"/>
    </location>
</feature>
<feature type="domain" description="MGS-like" evidence="2">
    <location>
        <begin position="2"/>
        <end position="150"/>
    </location>
</feature>
<evidence type="ECO:0000255" key="1">
    <source>
        <dbReference type="HAMAP-Rule" id="MF_00139"/>
    </source>
</evidence>
<evidence type="ECO:0000255" key="2">
    <source>
        <dbReference type="PROSITE-ProRule" id="PRU01202"/>
    </source>
</evidence>
<name>PUR9_BRADU</name>
<proteinExistence type="inferred from homology"/>